<comment type="function">
    <text evidence="3">Involved in the biosynthesis of the arabinogalactan (AG) region of the mycolylarabinogalactan-peptidoglycan (mAGP) complex, an essential component of the mycobacterial cell wall. Catalyzes the addition of an arabinofuranosyl (Araf) residue from the sugar donor decaprenyl-phospho-arabinose (DPA) on the C-3 of an alpha-(1-&gt;5)-linked Araf from the arabinan backbone of AG.</text>
</comment>
<comment type="catalytic activity">
    <reaction evidence="3">
        <text>Adds an alpha-D-arabinofuranosyl group from trans,octacis-decaprenylphospho-beta-D-arabinofuranose at the 3-O-position of an alpha-(1-&gt;5)-arabinofuranan chain attached to a beta-(1-&gt;5)-galactofuranan chain.</text>
        <dbReference type="EC" id="2.4.2.47"/>
    </reaction>
</comment>
<comment type="pathway">
    <text>Cell wall biogenesis; cell wall polysaccharide biosynthesis.</text>
</comment>
<comment type="subcellular location">
    <subcellularLocation>
        <location evidence="4">Membrane</location>
        <topology evidence="4">Multi-pass membrane protein</topology>
    </subcellularLocation>
</comment>
<comment type="disruption phenotype">
    <text evidence="3">Cells lacking this gene show cell death, a decrease in its activity, defects in cell division, reduced growth, alteration of colonial morphology, and accumulation of trehalose dimycolates in the cell envelope.</text>
</comment>
<keyword id="KW-0472">Membrane</keyword>
<keyword id="KW-1185">Reference proteome</keyword>
<keyword id="KW-0808">Transferase</keyword>
<keyword id="KW-0812">Transmembrane</keyword>
<keyword id="KW-1133">Transmembrane helix</keyword>
<sequence>MVAAATLVLTFAQSPGQISPDTKLDLTANPLRFLARAFNLWNSDLPFGQAQNQAYGYLFPHGTFFLLGDVLGVPGWVTQRLWWALLLTVGFWGVLRVAEALGIGSTPSRLIGAAAFALSPRVLTTLGAISSETLPMMLAPWVLLPVILALRGQHSVRLMAARSAGAVALMGAVNAVATLTGCLAAVIWWACHRPNRLWWRFTAWWLLCGALAVTWWVVALLMLGRISPPFLDFIESSGVTTQWMSLTEMLRGTMSWTPFVAPSATAGASLVTSTTAVLATTVVAAAGLAGLALRTMPARGRLITMLLIGVVLLGLGYSGGLGSPVALQVQAFLDGSGTPLRNLAKLEPVIRLPLALGLVHLLGRIPLPGSAPRAVWVSAFAHPERDKRVAVAIVVLSALAAGTSLAWTARLTPPGSFTAIPQHWHDAAAWLDEHNTDRGRVLVAPGAPFATQVWGNSHDEPLQVLGDNPWGVRDSIPLTPPETIRALDSVQRLFASGRPSPGLADTLARQGISYVVVRNDLDPDTSRSARPILVHRAVEGSPGLTKVAEFGDPVGPGTLEGFVADSGLRPRYPAVEIFRVEPADAGSSQQRSPMHPYLVDSDAMTRVAGAPEALLRLDERRRLNGEPPLGPMLLAADARRAGLPVDGVIVTDTPTAREIDYGRVDDHASAIRTPDDARHTYNRVPDYPSDGADLVYGKWTGGRLSVSSSAADSTALPYVAPATGPAAAIDSDSSTAWVSNALQAAVGQWLQVDFDHPVTNATLTITPSATAVGAQVRRIEIATATGTSSLRFDTAGKPLTIPLPVGETPWVRVTAVATDDGSPGVQFGVTDLAITQYDASGFAHPVTLRHTVEVPGPPAGSVVQQWDLGTELLGRPGCADSPVGVRCAAAMALASEEPVNLSRTLTVPQDTEVQPTVWIRGRQGPNLADLVAQPDTTRAFGDSDPIDVLGSAYAATDGDPRTSWTAPQRVVQFQTPPTLTLKLPRPTEVSGMRIVPGDTEPPAHPTLVAIDLGDGPQMHRLPADGEPRTVTLKPRVTDTVTVSLLAWNDIIDRTSLGFDQLKPPGLAELTVLDGRGAPVGAADAAKNRSRAVALPCGQGPIIAVAGQFIQTSVHTTVGALLDGEPIPARPCRSEPVKLPAGQQELVVSPGAAFIVDGVELPTPAADEIRSAPTTSAETGTWTADRREVRVSAAAQQRVLVVPESVNRGWSAHDPAGAELQSVTVNGWQQGWVVPAGTEGTVTLTFASNMPYRVGLIGGLALLPLLALLALIPVRRPVRAAAPARPWNPGPVLTGAAALVAGTAISGVAGLLVVGAAMGVRILLNRRGAAGEKVWDNVTVVVAAGGLILAGSVLSQYPWRSVDGYVGHTPGVQFLALLSVAFLAASAVRLVNRPEPSEDGRSAKPEHTGASAHAG</sequence>
<evidence type="ECO:0000255" key="1"/>
<evidence type="ECO:0000256" key="2">
    <source>
        <dbReference type="SAM" id="MobiDB-lite"/>
    </source>
</evidence>
<evidence type="ECO:0000269" key="3">
    <source>
    </source>
</evidence>
<evidence type="ECO:0000305" key="4"/>
<feature type="chain" id="PRO_0000420583" description="Alpha-(1-&gt;3)-arabinofuranosyltransferase">
    <location>
        <begin position="1"/>
        <end position="1414"/>
    </location>
</feature>
<feature type="transmembrane region" description="Helical" evidence="1">
    <location>
        <begin position="57"/>
        <end position="77"/>
    </location>
</feature>
<feature type="transmembrane region" description="Helical" evidence="1">
    <location>
        <begin position="81"/>
        <end position="101"/>
    </location>
</feature>
<feature type="transmembrane region" description="Helical" evidence="1">
    <location>
        <begin position="128"/>
        <end position="148"/>
    </location>
</feature>
<feature type="transmembrane region" description="Helical" evidence="1">
    <location>
        <begin position="167"/>
        <end position="187"/>
    </location>
</feature>
<feature type="transmembrane region" description="Helical" evidence="1">
    <location>
        <begin position="203"/>
        <end position="223"/>
    </location>
</feature>
<feature type="transmembrane region" description="Helical" evidence="1">
    <location>
        <begin position="273"/>
        <end position="293"/>
    </location>
</feature>
<feature type="transmembrane region" description="Helical" evidence="1">
    <location>
        <begin position="302"/>
        <end position="322"/>
    </location>
</feature>
<feature type="transmembrane region" description="Helical" evidence="1">
    <location>
        <begin position="352"/>
        <end position="372"/>
    </location>
</feature>
<feature type="transmembrane region" description="Helical" evidence="1">
    <location>
        <begin position="389"/>
        <end position="409"/>
    </location>
</feature>
<feature type="transmembrane region" description="Helical" evidence="1">
    <location>
        <begin position="1253"/>
        <end position="1273"/>
    </location>
</feature>
<feature type="transmembrane region" description="Helical" evidence="1">
    <location>
        <begin position="1297"/>
        <end position="1317"/>
    </location>
</feature>
<feature type="transmembrane region" description="Helical" evidence="1">
    <location>
        <begin position="1333"/>
        <end position="1353"/>
    </location>
</feature>
<feature type="transmembrane region" description="Helical" evidence="1">
    <location>
        <begin position="1364"/>
        <end position="1384"/>
    </location>
</feature>
<feature type="domain" description="F5/8 type C">
    <location>
        <begin position="687"/>
        <end position="845"/>
    </location>
</feature>
<feature type="region of interest" description="Disordered" evidence="2">
    <location>
        <begin position="1393"/>
        <end position="1414"/>
    </location>
</feature>
<feature type="compositionally biased region" description="Basic and acidic residues" evidence="2">
    <location>
        <begin position="1394"/>
        <end position="1406"/>
    </location>
</feature>
<name>AFTD_MYCS2</name>
<organism>
    <name type="scientific">Mycolicibacterium smegmatis (strain ATCC 700084 / mc(2)155)</name>
    <name type="common">Mycobacterium smegmatis</name>
    <dbReference type="NCBI Taxonomy" id="246196"/>
    <lineage>
        <taxon>Bacteria</taxon>
        <taxon>Bacillati</taxon>
        <taxon>Actinomycetota</taxon>
        <taxon>Actinomycetes</taxon>
        <taxon>Mycobacteriales</taxon>
        <taxon>Mycobacteriaceae</taxon>
        <taxon>Mycolicibacterium</taxon>
    </lineage>
</organism>
<reference key="1">
    <citation type="submission" date="2006-10" db="EMBL/GenBank/DDBJ databases">
        <authorList>
            <person name="Fleischmann R.D."/>
            <person name="Dodson R.J."/>
            <person name="Haft D.H."/>
            <person name="Merkel J.S."/>
            <person name="Nelson W.C."/>
            <person name="Fraser C.M."/>
        </authorList>
    </citation>
    <scope>NUCLEOTIDE SEQUENCE [LARGE SCALE GENOMIC DNA]</scope>
    <source>
        <strain>ATCC 700084 / mc(2)155</strain>
    </source>
</reference>
<reference key="2">
    <citation type="journal article" date="2007" name="Genome Biol.">
        <title>Interrupted coding sequences in Mycobacterium smegmatis: authentic mutations or sequencing errors?</title>
        <authorList>
            <person name="Deshayes C."/>
            <person name="Perrodou E."/>
            <person name="Gallien S."/>
            <person name="Euphrasie D."/>
            <person name="Schaeffer C."/>
            <person name="Van-Dorsselaer A."/>
            <person name="Poch O."/>
            <person name="Lecompte O."/>
            <person name="Reyrat J.-M."/>
        </authorList>
    </citation>
    <scope>NUCLEOTIDE SEQUENCE [LARGE SCALE GENOMIC DNA]</scope>
    <source>
        <strain>ATCC 700084 / mc(2)155</strain>
    </source>
</reference>
<reference key="3">
    <citation type="journal article" date="2009" name="Genome Res.">
        <title>Ortho-proteogenomics: multiple proteomes investigation through orthology and a new MS-based protocol.</title>
        <authorList>
            <person name="Gallien S."/>
            <person name="Perrodou E."/>
            <person name="Carapito C."/>
            <person name="Deshayes C."/>
            <person name="Reyrat J.-M."/>
            <person name="Van Dorsselaer A."/>
            <person name="Poch O."/>
            <person name="Schaeffer C."/>
            <person name="Lecompte O."/>
        </authorList>
    </citation>
    <scope>NUCLEOTIDE SEQUENCE [LARGE SCALE GENOMIC DNA]</scope>
    <source>
        <strain>ATCC 700084 / mc(2)155</strain>
    </source>
</reference>
<reference key="4">
    <citation type="journal article" date="2009" name="Glycobiology">
        <title>AftD, a novel essential arabinofuranosyltransferase from mycobacteria.</title>
        <authorList>
            <person name="Skovierova H."/>
            <person name="Larrouy-Maumus G."/>
            <person name="Zhang J."/>
            <person name="Kaur D."/>
            <person name="Barilone N."/>
            <person name="Kordulakova J."/>
            <person name="Gilleron M."/>
            <person name="Guadagnini S."/>
            <person name="Belanova M."/>
            <person name="Prevost M.C."/>
            <person name="Gicquel B."/>
            <person name="Puzo G."/>
            <person name="Chatterjee D."/>
            <person name="Brennan P.J."/>
            <person name="Nigou J."/>
            <person name="Jackson M."/>
        </authorList>
    </citation>
    <scope>FUNCTION</scope>
    <scope>CATALYTIC ACTIVITY</scope>
    <scope>DISRUPTION PHENOTYPE</scope>
</reference>
<dbReference type="EC" id="2.4.2.47"/>
<dbReference type="EMBL" id="CP000480">
    <property type="protein sequence ID" value="ABK71542.1"/>
    <property type="molecule type" value="Genomic_DNA"/>
</dbReference>
<dbReference type="EMBL" id="CP001663">
    <property type="protein sequence ID" value="AFP36833.1"/>
    <property type="molecule type" value="Genomic_DNA"/>
</dbReference>
<dbReference type="RefSeq" id="YP_884772.1">
    <property type="nucleotide sequence ID" value="NC_008596.1"/>
</dbReference>
<dbReference type="SMR" id="A0QPD4"/>
<dbReference type="STRING" id="246196.MSMEG_0359"/>
<dbReference type="PaxDb" id="246196-MSMEI_0352"/>
<dbReference type="KEGG" id="msb:LJ00_01795"/>
<dbReference type="KEGG" id="msg:MSMEI_0352"/>
<dbReference type="KEGG" id="msm:MSMEG_0359"/>
<dbReference type="PATRIC" id="fig|246196.19.peg.356"/>
<dbReference type="eggNOG" id="COG4981">
    <property type="taxonomic scope" value="Bacteria"/>
</dbReference>
<dbReference type="OrthoDB" id="5242711at2"/>
<dbReference type="UniPathway" id="UPA00963"/>
<dbReference type="Proteomes" id="UP000000757">
    <property type="component" value="Chromosome"/>
</dbReference>
<dbReference type="Proteomes" id="UP000006158">
    <property type="component" value="Chromosome"/>
</dbReference>
<dbReference type="GO" id="GO:0016020">
    <property type="term" value="C:membrane"/>
    <property type="evidence" value="ECO:0007669"/>
    <property type="project" value="UniProtKB-SubCell"/>
</dbReference>
<dbReference type="GO" id="GO:0016740">
    <property type="term" value="F:transferase activity"/>
    <property type="evidence" value="ECO:0007669"/>
    <property type="project" value="UniProtKB-KW"/>
</dbReference>
<dbReference type="GO" id="GO:0045227">
    <property type="term" value="P:capsule polysaccharide biosynthetic process"/>
    <property type="evidence" value="ECO:0007669"/>
    <property type="project" value="UniProtKB-UniPathway"/>
</dbReference>
<dbReference type="FunFam" id="2.60.120.260:FF:000113">
    <property type="entry name" value="Conserved transmembrane protein"/>
    <property type="match status" value="1"/>
</dbReference>
<dbReference type="Gene3D" id="2.60.120.260">
    <property type="entry name" value="Galactose-binding domain-like"/>
    <property type="match status" value="1"/>
</dbReference>
<dbReference type="InterPro" id="IPR021798">
    <property type="entry name" value="AftD_N"/>
</dbReference>
<dbReference type="InterPro" id="IPR056997">
    <property type="entry name" value="CBM_AftD"/>
</dbReference>
<dbReference type="InterPro" id="IPR008979">
    <property type="entry name" value="Galactose-bd-like_sf"/>
</dbReference>
<dbReference type="Pfam" id="PF24607">
    <property type="entry name" value="CBM_AftD"/>
    <property type="match status" value="1"/>
</dbReference>
<dbReference type="Pfam" id="PF11847">
    <property type="entry name" value="GT-C_AftD"/>
    <property type="match status" value="1"/>
</dbReference>
<dbReference type="SUPFAM" id="SSF49785">
    <property type="entry name" value="Galactose-binding domain-like"/>
    <property type="match status" value="2"/>
</dbReference>
<gene>
    <name type="primary">aftD</name>
    <name type="ordered locus">MSMEG_0359</name>
    <name type="ordered locus">MSMEI_0352</name>
</gene>
<accession>A0QPD4</accession>
<proteinExistence type="evidence at protein level"/>
<protein>
    <recommendedName>
        <fullName>Alpha-(1-&gt;3)-arabinofuranosyltransferase</fullName>
        <ecNumber>2.4.2.47</ecNumber>
    </recommendedName>
    <alternativeName>
        <fullName>Arabinofuranan 3-O-arabinosyltransferase</fullName>
    </alternativeName>
</protein>